<comment type="function">
    <text evidence="1">Involved in peptide bond synthesis. Stimulates efficient translation and peptide-bond synthesis on native or reconstituted 70S ribosomes in vitro. Probably functions indirectly by altering the affinity of the ribosome for aminoacyl-tRNA, thus increasing their reactivity as acceptors for peptidyl transferase.</text>
</comment>
<comment type="pathway">
    <text evidence="1">Protein biosynthesis; polypeptide chain elongation.</text>
</comment>
<comment type="subcellular location">
    <subcellularLocation>
        <location evidence="1">Cytoplasm</location>
    </subcellularLocation>
</comment>
<comment type="similarity">
    <text evidence="1">Belongs to the elongation factor P family.</text>
</comment>
<keyword id="KW-0963">Cytoplasm</keyword>
<keyword id="KW-0251">Elongation factor</keyword>
<keyword id="KW-0648">Protein biosynthesis</keyword>
<keyword id="KW-1185">Reference proteome</keyword>
<feature type="chain" id="PRO_1000096146" description="Elongation factor P">
    <location>
        <begin position="1"/>
        <end position="184"/>
    </location>
</feature>
<dbReference type="EMBL" id="CP000884">
    <property type="protein sequence ID" value="ABX35509.1"/>
    <property type="molecule type" value="Genomic_DNA"/>
</dbReference>
<dbReference type="RefSeq" id="WP_012204719.1">
    <property type="nucleotide sequence ID" value="NC_010002.1"/>
</dbReference>
<dbReference type="SMR" id="A9BVZ6"/>
<dbReference type="STRING" id="398578.Daci_2871"/>
<dbReference type="GeneID" id="24119579"/>
<dbReference type="KEGG" id="dac:Daci_2871"/>
<dbReference type="eggNOG" id="COG0231">
    <property type="taxonomic scope" value="Bacteria"/>
</dbReference>
<dbReference type="HOGENOM" id="CLU_074944_2_1_4"/>
<dbReference type="UniPathway" id="UPA00345"/>
<dbReference type="Proteomes" id="UP000000784">
    <property type="component" value="Chromosome"/>
</dbReference>
<dbReference type="GO" id="GO:0005737">
    <property type="term" value="C:cytoplasm"/>
    <property type="evidence" value="ECO:0007669"/>
    <property type="project" value="UniProtKB-SubCell"/>
</dbReference>
<dbReference type="GO" id="GO:0003746">
    <property type="term" value="F:translation elongation factor activity"/>
    <property type="evidence" value="ECO:0007669"/>
    <property type="project" value="UniProtKB-UniRule"/>
</dbReference>
<dbReference type="GO" id="GO:0043043">
    <property type="term" value="P:peptide biosynthetic process"/>
    <property type="evidence" value="ECO:0007669"/>
    <property type="project" value="InterPro"/>
</dbReference>
<dbReference type="CDD" id="cd05794">
    <property type="entry name" value="S1_EF-P_repeat_2"/>
    <property type="match status" value="1"/>
</dbReference>
<dbReference type="FunFam" id="2.30.30.30:FF:000003">
    <property type="entry name" value="Elongation factor P"/>
    <property type="match status" value="1"/>
</dbReference>
<dbReference type="FunFam" id="2.40.50.140:FF:000004">
    <property type="entry name" value="Elongation factor P"/>
    <property type="match status" value="1"/>
</dbReference>
<dbReference type="FunFam" id="2.40.50.140:FF:000009">
    <property type="entry name" value="Elongation factor P"/>
    <property type="match status" value="1"/>
</dbReference>
<dbReference type="Gene3D" id="2.30.30.30">
    <property type="match status" value="1"/>
</dbReference>
<dbReference type="Gene3D" id="2.40.50.140">
    <property type="entry name" value="Nucleic acid-binding proteins"/>
    <property type="match status" value="2"/>
</dbReference>
<dbReference type="HAMAP" id="MF_00141">
    <property type="entry name" value="EF_P"/>
    <property type="match status" value="1"/>
</dbReference>
<dbReference type="InterPro" id="IPR015365">
    <property type="entry name" value="Elong-fact-P_C"/>
</dbReference>
<dbReference type="InterPro" id="IPR012340">
    <property type="entry name" value="NA-bd_OB-fold"/>
</dbReference>
<dbReference type="InterPro" id="IPR014722">
    <property type="entry name" value="Rib_uL2_dom2"/>
</dbReference>
<dbReference type="InterPro" id="IPR020599">
    <property type="entry name" value="Transl_elong_fac_P/YeiP"/>
</dbReference>
<dbReference type="InterPro" id="IPR013185">
    <property type="entry name" value="Transl_elong_KOW-like"/>
</dbReference>
<dbReference type="InterPro" id="IPR001059">
    <property type="entry name" value="Transl_elong_P/YeiP_cen"/>
</dbReference>
<dbReference type="InterPro" id="IPR013852">
    <property type="entry name" value="Transl_elong_P/YeiP_CS"/>
</dbReference>
<dbReference type="InterPro" id="IPR011768">
    <property type="entry name" value="Transl_elongation_fac_P"/>
</dbReference>
<dbReference type="InterPro" id="IPR008991">
    <property type="entry name" value="Translation_prot_SH3-like_sf"/>
</dbReference>
<dbReference type="NCBIfam" id="TIGR00038">
    <property type="entry name" value="efp"/>
    <property type="match status" value="1"/>
</dbReference>
<dbReference type="NCBIfam" id="NF001810">
    <property type="entry name" value="PRK00529.1"/>
    <property type="match status" value="1"/>
</dbReference>
<dbReference type="PANTHER" id="PTHR30053">
    <property type="entry name" value="ELONGATION FACTOR P"/>
    <property type="match status" value="1"/>
</dbReference>
<dbReference type="PANTHER" id="PTHR30053:SF12">
    <property type="entry name" value="ELONGATION FACTOR P (EF-P) FAMILY PROTEIN"/>
    <property type="match status" value="1"/>
</dbReference>
<dbReference type="Pfam" id="PF01132">
    <property type="entry name" value="EFP"/>
    <property type="match status" value="1"/>
</dbReference>
<dbReference type="Pfam" id="PF08207">
    <property type="entry name" value="EFP_N"/>
    <property type="match status" value="1"/>
</dbReference>
<dbReference type="Pfam" id="PF09285">
    <property type="entry name" value="Elong-fact-P_C"/>
    <property type="match status" value="1"/>
</dbReference>
<dbReference type="PIRSF" id="PIRSF005901">
    <property type="entry name" value="EF-P"/>
    <property type="match status" value="1"/>
</dbReference>
<dbReference type="SMART" id="SM01185">
    <property type="entry name" value="EFP"/>
    <property type="match status" value="1"/>
</dbReference>
<dbReference type="SMART" id="SM00841">
    <property type="entry name" value="Elong-fact-P_C"/>
    <property type="match status" value="1"/>
</dbReference>
<dbReference type="SUPFAM" id="SSF50249">
    <property type="entry name" value="Nucleic acid-binding proteins"/>
    <property type="match status" value="2"/>
</dbReference>
<dbReference type="SUPFAM" id="SSF50104">
    <property type="entry name" value="Translation proteins SH3-like domain"/>
    <property type="match status" value="1"/>
</dbReference>
<dbReference type="PROSITE" id="PS01275">
    <property type="entry name" value="EFP"/>
    <property type="match status" value="1"/>
</dbReference>
<gene>
    <name evidence="1" type="primary">efp</name>
    <name type="ordered locus">Daci_2871</name>
</gene>
<protein>
    <recommendedName>
        <fullName evidence="1">Elongation factor P</fullName>
        <shortName evidence="1">EF-P</shortName>
    </recommendedName>
</protein>
<proteinExistence type="inferred from homology"/>
<organism>
    <name type="scientific">Delftia acidovorans (strain DSM 14801 / SPH-1)</name>
    <dbReference type="NCBI Taxonomy" id="398578"/>
    <lineage>
        <taxon>Bacteria</taxon>
        <taxon>Pseudomonadati</taxon>
        <taxon>Pseudomonadota</taxon>
        <taxon>Betaproteobacteria</taxon>
        <taxon>Burkholderiales</taxon>
        <taxon>Comamonadaceae</taxon>
        <taxon>Delftia</taxon>
    </lineage>
</organism>
<name>EFP_DELAS</name>
<accession>A9BVZ6</accession>
<evidence type="ECO:0000255" key="1">
    <source>
        <dbReference type="HAMAP-Rule" id="MF_00141"/>
    </source>
</evidence>
<sequence length="184" mass="20549">MKIAQEIRAGNVIMHGKDPMIVLKTEYARGGRGAATVRMKLKSLLGNMGTEVVFKADDKIDNVILDKKECTYSYFADPMYVWMDADFNQYEVEATNMGDAINYLEDGMEAEVVFYDGKAISCELPTSVEREITWTEPAVKGDTSGKVLKPAKIATGFEVPVPLFVSQGDKIEIDTRTGEYRKRV</sequence>
<reference key="1">
    <citation type="submission" date="2007-11" db="EMBL/GenBank/DDBJ databases">
        <title>Complete sequence of Delftia acidovorans DSM 14801 / SPH-1.</title>
        <authorList>
            <person name="Copeland A."/>
            <person name="Lucas S."/>
            <person name="Lapidus A."/>
            <person name="Barry K."/>
            <person name="Glavina del Rio T."/>
            <person name="Dalin E."/>
            <person name="Tice H."/>
            <person name="Pitluck S."/>
            <person name="Lowry S."/>
            <person name="Clum A."/>
            <person name="Schmutz J."/>
            <person name="Larimer F."/>
            <person name="Land M."/>
            <person name="Hauser L."/>
            <person name="Kyrpides N."/>
            <person name="Kim E."/>
            <person name="Schleheck D."/>
            <person name="Richardson P."/>
        </authorList>
    </citation>
    <scope>NUCLEOTIDE SEQUENCE [LARGE SCALE GENOMIC DNA]</scope>
    <source>
        <strain>DSM 14801 / SPH-1</strain>
    </source>
</reference>